<name>COAX_ROSS1</name>
<evidence type="ECO:0000255" key="1">
    <source>
        <dbReference type="HAMAP-Rule" id="MF_01274"/>
    </source>
</evidence>
<accession>A5UVB3</accession>
<reference key="1">
    <citation type="submission" date="2007-04" db="EMBL/GenBank/DDBJ databases">
        <title>Complete sequence of Roseiflexus sp. RS-1.</title>
        <authorList>
            <consortium name="US DOE Joint Genome Institute"/>
            <person name="Copeland A."/>
            <person name="Lucas S."/>
            <person name="Lapidus A."/>
            <person name="Barry K."/>
            <person name="Detter J.C."/>
            <person name="Glavina del Rio T."/>
            <person name="Hammon N."/>
            <person name="Israni S."/>
            <person name="Dalin E."/>
            <person name="Tice H."/>
            <person name="Pitluck S."/>
            <person name="Chertkov O."/>
            <person name="Brettin T."/>
            <person name="Bruce D."/>
            <person name="Han C."/>
            <person name="Schmutz J."/>
            <person name="Larimer F."/>
            <person name="Land M."/>
            <person name="Hauser L."/>
            <person name="Kyrpides N."/>
            <person name="Mikhailova N."/>
            <person name="Bryant D.A."/>
            <person name="Richardson P."/>
        </authorList>
    </citation>
    <scope>NUCLEOTIDE SEQUENCE [LARGE SCALE GENOMIC DNA]</scope>
    <source>
        <strain>RS-1</strain>
    </source>
</reference>
<sequence length="255" mass="27605">MLLTIDIGNTNIKIGVYQDERLTAHWRVTTERHRLADEYLVLLHNLFDLGGIDPREIDGCAISCVVPPLTGEFRTLCRTYFRVEPLMVNATTPTGLRYNVDTPAELGADRIANSLAAFRRYGGPVIVLAFGTATTFDVITADGEYIGGAIAPGIGISADALFRLAAKLYQVELVRPPSVIGKNTIHHMQSGVILGYAGLVEGLVNRMQAELGTSCPVVATGGLAELIAAETEAITTVEPYLTLEGLRLIYEMNRS</sequence>
<comment type="function">
    <text evidence="1">Catalyzes the phosphorylation of pantothenate (Pan), the first step in CoA biosynthesis.</text>
</comment>
<comment type="catalytic activity">
    <reaction evidence="1">
        <text>(R)-pantothenate + ATP = (R)-4'-phosphopantothenate + ADP + H(+)</text>
        <dbReference type="Rhea" id="RHEA:16373"/>
        <dbReference type="ChEBI" id="CHEBI:10986"/>
        <dbReference type="ChEBI" id="CHEBI:15378"/>
        <dbReference type="ChEBI" id="CHEBI:29032"/>
        <dbReference type="ChEBI" id="CHEBI:30616"/>
        <dbReference type="ChEBI" id="CHEBI:456216"/>
        <dbReference type="EC" id="2.7.1.33"/>
    </reaction>
</comment>
<comment type="cofactor">
    <cofactor evidence="1">
        <name>NH4(+)</name>
        <dbReference type="ChEBI" id="CHEBI:28938"/>
    </cofactor>
    <cofactor evidence="1">
        <name>K(+)</name>
        <dbReference type="ChEBI" id="CHEBI:29103"/>
    </cofactor>
    <text evidence="1">A monovalent cation. Ammonium or potassium.</text>
</comment>
<comment type="pathway">
    <text evidence="1">Cofactor biosynthesis; coenzyme A biosynthesis; CoA from (R)-pantothenate: step 1/5.</text>
</comment>
<comment type="subunit">
    <text evidence="1">Homodimer.</text>
</comment>
<comment type="subcellular location">
    <subcellularLocation>
        <location evidence="1">Cytoplasm</location>
    </subcellularLocation>
</comment>
<comment type="similarity">
    <text evidence="1">Belongs to the type III pantothenate kinase family.</text>
</comment>
<feature type="chain" id="PRO_1000054408" description="Type III pantothenate kinase">
    <location>
        <begin position="1"/>
        <end position="255"/>
    </location>
</feature>
<feature type="active site" description="Proton acceptor" evidence="1">
    <location>
        <position position="109"/>
    </location>
</feature>
<feature type="binding site" evidence="1">
    <location>
        <begin position="6"/>
        <end position="13"/>
    </location>
    <ligand>
        <name>ATP</name>
        <dbReference type="ChEBI" id="CHEBI:30616"/>
    </ligand>
</feature>
<feature type="binding site" evidence="1">
    <location>
        <begin position="107"/>
        <end position="110"/>
    </location>
    <ligand>
        <name>substrate</name>
    </ligand>
</feature>
<feature type="binding site" evidence="1">
    <location>
        <position position="132"/>
    </location>
    <ligand>
        <name>ATP</name>
        <dbReference type="ChEBI" id="CHEBI:30616"/>
    </ligand>
</feature>
<feature type="binding site" evidence="1">
    <location>
        <position position="184"/>
    </location>
    <ligand>
        <name>substrate</name>
    </ligand>
</feature>
<dbReference type="EC" id="2.7.1.33" evidence="1"/>
<dbReference type="EMBL" id="CP000686">
    <property type="protein sequence ID" value="ABQ90566.1"/>
    <property type="molecule type" value="Genomic_DNA"/>
</dbReference>
<dbReference type="RefSeq" id="WP_011956912.1">
    <property type="nucleotide sequence ID" value="NC_009523.1"/>
</dbReference>
<dbReference type="SMR" id="A5UVB3"/>
<dbReference type="STRING" id="357808.RoseRS_2186"/>
<dbReference type="KEGG" id="rrs:RoseRS_2186"/>
<dbReference type="eggNOG" id="COG1521">
    <property type="taxonomic scope" value="Bacteria"/>
</dbReference>
<dbReference type="HOGENOM" id="CLU_066627_1_0_0"/>
<dbReference type="OrthoDB" id="9804707at2"/>
<dbReference type="UniPathway" id="UPA00241">
    <property type="reaction ID" value="UER00352"/>
</dbReference>
<dbReference type="Proteomes" id="UP000006554">
    <property type="component" value="Chromosome"/>
</dbReference>
<dbReference type="GO" id="GO:0005737">
    <property type="term" value="C:cytoplasm"/>
    <property type="evidence" value="ECO:0007669"/>
    <property type="project" value="UniProtKB-SubCell"/>
</dbReference>
<dbReference type="GO" id="GO:0005524">
    <property type="term" value="F:ATP binding"/>
    <property type="evidence" value="ECO:0007669"/>
    <property type="project" value="UniProtKB-UniRule"/>
</dbReference>
<dbReference type="GO" id="GO:0004594">
    <property type="term" value="F:pantothenate kinase activity"/>
    <property type="evidence" value="ECO:0007669"/>
    <property type="project" value="UniProtKB-UniRule"/>
</dbReference>
<dbReference type="GO" id="GO:0015937">
    <property type="term" value="P:coenzyme A biosynthetic process"/>
    <property type="evidence" value="ECO:0007669"/>
    <property type="project" value="UniProtKB-UniRule"/>
</dbReference>
<dbReference type="CDD" id="cd24015">
    <property type="entry name" value="ASKHA_NBD_PanK-III"/>
    <property type="match status" value="1"/>
</dbReference>
<dbReference type="Gene3D" id="3.30.420.40">
    <property type="match status" value="2"/>
</dbReference>
<dbReference type="HAMAP" id="MF_01274">
    <property type="entry name" value="Pantothen_kinase_3"/>
    <property type="match status" value="1"/>
</dbReference>
<dbReference type="InterPro" id="IPR043129">
    <property type="entry name" value="ATPase_NBD"/>
</dbReference>
<dbReference type="InterPro" id="IPR004619">
    <property type="entry name" value="Type_III_PanK"/>
</dbReference>
<dbReference type="NCBIfam" id="TIGR00671">
    <property type="entry name" value="baf"/>
    <property type="match status" value="1"/>
</dbReference>
<dbReference type="NCBIfam" id="NF009848">
    <property type="entry name" value="PRK13318.1-6"/>
    <property type="match status" value="1"/>
</dbReference>
<dbReference type="NCBIfam" id="NF009855">
    <property type="entry name" value="PRK13321.1"/>
    <property type="match status" value="1"/>
</dbReference>
<dbReference type="PANTHER" id="PTHR34265">
    <property type="entry name" value="TYPE III PANTOTHENATE KINASE"/>
    <property type="match status" value="1"/>
</dbReference>
<dbReference type="PANTHER" id="PTHR34265:SF1">
    <property type="entry name" value="TYPE III PANTOTHENATE KINASE"/>
    <property type="match status" value="1"/>
</dbReference>
<dbReference type="Pfam" id="PF03309">
    <property type="entry name" value="Pan_kinase"/>
    <property type="match status" value="1"/>
</dbReference>
<dbReference type="SUPFAM" id="SSF53067">
    <property type="entry name" value="Actin-like ATPase domain"/>
    <property type="match status" value="2"/>
</dbReference>
<proteinExistence type="inferred from homology"/>
<organism>
    <name type="scientific">Roseiflexus sp. (strain RS-1)</name>
    <dbReference type="NCBI Taxonomy" id="357808"/>
    <lineage>
        <taxon>Bacteria</taxon>
        <taxon>Bacillati</taxon>
        <taxon>Chloroflexota</taxon>
        <taxon>Chloroflexia</taxon>
        <taxon>Chloroflexales</taxon>
        <taxon>Roseiflexineae</taxon>
        <taxon>Roseiflexaceae</taxon>
        <taxon>Roseiflexus</taxon>
    </lineage>
</organism>
<protein>
    <recommendedName>
        <fullName evidence="1">Type III pantothenate kinase</fullName>
        <ecNumber evidence="1">2.7.1.33</ecNumber>
    </recommendedName>
    <alternativeName>
        <fullName evidence="1">PanK-III</fullName>
    </alternativeName>
    <alternativeName>
        <fullName evidence="1">Pantothenic acid kinase</fullName>
    </alternativeName>
</protein>
<gene>
    <name evidence="1" type="primary">coaX</name>
    <name type="ordered locus">RoseRS_2186</name>
</gene>
<keyword id="KW-0067">ATP-binding</keyword>
<keyword id="KW-0173">Coenzyme A biosynthesis</keyword>
<keyword id="KW-0963">Cytoplasm</keyword>
<keyword id="KW-0418">Kinase</keyword>
<keyword id="KW-0547">Nucleotide-binding</keyword>
<keyword id="KW-0630">Potassium</keyword>
<keyword id="KW-0808">Transferase</keyword>